<accession>B3QCH4</accession>
<protein>
    <recommendedName>
        <fullName evidence="1">Succinyl-diaminopimelate desuccinylase</fullName>
        <shortName evidence="1">SDAP desuccinylase</shortName>
        <ecNumber evidence="1">3.5.1.18</ecNumber>
    </recommendedName>
    <alternativeName>
        <fullName evidence="1">N-succinyl-LL-2,6-diaminoheptanedioate amidohydrolase</fullName>
    </alternativeName>
</protein>
<reference key="1">
    <citation type="submission" date="2008-05" db="EMBL/GenBank/DDBJ databases">
        <title>Complete sequence of Rhodopseudomonas palustris TIE-1.</title>
        <authorList>
            <consortium name="US DOE Joint Genome Institute"/>
            <person name="Lucas S."/>
            <person name="Copeland A."/>
            <person name="Lapidus A."/>
            <person name="Glavina del Rio T."/>
            <person name="Dalin E."/>
            <person name="Tice H."/>
            <person name="Pitluck S."/>
            <person name="Chain P."/>
            <person name="Malfatti S."/>
            <person name="Shin M."/>
            <person name="Vergez L."/>
            <person name="Lang D."/>
            <person name="Schmutz J."/>
            <person name="Larimer F."/>
            <person name="Land M."/>
            <person name="Hauser L."/>
            <person name="Kyrpides N."/>
            <person name="Mikhailova N."/>
            <person name="Emerson D."/>
            <person name="Newman D.K."/>
            <person name="Roden E."/>
            <person name="Richardson P."/>
        </authorList>
    </citation>
    <scope>NUCLEOTIDE SEQUENCE [LARGE SCALE GENOMIC DNA]</scope>
    <source>
        <strain>TIE-1</strain>
    </source>
</reference>
<comment type="function">
    <text evidence="1">Catalyzes the hydrolysis of N-succinyl-L,L-diaminopimelic acid (SDAP), forming succinate and LL-2,6-diaminopimelate (DAP), an intermediate involved in the bacterial biosynthesis of lysine and meso-diaminopimelic acid, an essential component of bacterial cell walls.</text>
</comment>
<comment type="catalytic activity">
    <reaction evidence="1">
        <text>N-succinyl-(2S,6S)-2,6-diaminopimelate + H2O = (2S,6S)-2,6-diaminopimelate + succinate</text>
        <dbReference type="Rhea" id="RHEA:22608"/>
        <dbReference type="ChEBI" id="CHEBI:15377"/>
        <dbReference type="ChEBI" id="CHEBI:30031"/>
        <dbReference type="ChEBI" id="CHEBI:57609"/>
        <dbReference type="ChEBI" id="CHEBI:58087"/>
        <dbReference type="EC" id="3.5.1.18"/>
    </reaction>
</comment>
<comment type="cofactor">
    <cofactor evidence="1">
        <name>Zn(2+)</name>
        <dbReference type="ChEBI" id="CHEBI:29105"/>
    </cofactor>
    <cofactor evidence="1">
        <name>Co(2+)</name>
        <dbReference type="ChEBI" id="CHEBI:48828"/>
    </cofactor>
    <text evidence="1">Binds 2 Zn(2+) or Co(2+) ions per subunit.</text>
</comment>
<comment type="pathway">
    <text evidence="1">Amino-acid biosynthesis; L-lysine biosynthesis via DAP pathway; LL-2,6-diaminopimelate from (S)-tetrahydrodipicolinate (succinylase route): step 3/3.</text>
</comment>
<comment type="subunit">
    <text evidence="1">Homodimer.</text>
</comment>
<comment type="similarity">
    <text evidence="1">Belongs to the peptidase M20A family. DapE subfamily.</text>
</comment>
<sequence length="387" mass="40949">MTSTPTALSIAQDLLRCPSVTPADAGALDVLETLLKGAGFTVHRVTFSEPGTADIDNLYARIGNTSPHLCFAGHTDVVPPGDASAWTHGAFAGDVADGLLYGRGAVDMKGGIACAVAATLDYLAANGGQPKGSISFLITGDEEDVAVNGTVKLLQWAAERGEQFDHCIVGEPSNVETIGDTIKIGRRGSQSGVLIVDGVQGHVAYPHRAANPVPDIARLITTLNDEPLDHGSAQFQPSNLEFTSVDVGNPATNVIPAQARAKFNIRFNDHHTQETLKALVEQRLAAACGNRIRAHIEWLPSNADVFVTKPGAFTDLVGAAIAEVTGRTPELNTGGGTSDARFIAKYCQVVEFGLVGQTMHQIDERTPVSDLDKLTAIYRGVLQRYFA</sequence>
<proteinExistence type="inferred from homology"/>
<name>DAPE_RHOPT</name>
<evidence type="ECO:0000255" key="1">
    <source>
        <dbReference type="HAMAP-Rule" id="MF_01690"/>
    </source>
</evidence>
<dbReference type="EC" id="3.5.1.18" evidence="1"/>
<dbReference type="EMBL" id="CP001096">
    <property type="protein sequence ID" value="ACE99187.1"/>
    <property type="molecule type" value="Genomic_DNA"/>
</dbReference>
<dbReference type="RefSeq" id="WP_012494286.1">
    <property type="nucleotide sequence ID" value="NC_011004.1"/>
</dbReference>
<dbReference type="SMR" id="B3QCH4"/>
<dbReference type="KEGG" id="rpt:Rpal_0628"/>
<dbReference type="HOGENOM" id="CLU_021802_4_0_5"/>
<dbReference type="OrthoDB" id="9809784at2"/>
<dbReference type="UniPathway" id="UPA00034">
    <property type="reaction ID" value="UER00021"/>
</dbReference>
<dbReference type="Proteomes" id="UP000001725">
    <property type="component" value="Chromosome"/>
</dbReference>
<dbReference type="GO" id="GO:0008777">
    <property type="term" value="F:acetylornithine deacetylase activity"/>
    <property type="evidence" value="ECO:0007669"/>
    <property type="project" value="TreeGrafter"/>
</dbReference>
<dbReference type="GO" id="GO:0050897">
    <property type="term" value="F:cobalt ion binding"/>
    <property type="evidence" value="ECO:0007669"/>
    <property type="project" value="UniProtKB-UniRule"/>
</dbReference>
<dbReference type="GO" id="GO:0009014">
    <property type="term" value="F:succinyl-diaminopimelate desuccinylase activity"/>
    <property type="evidence" value="ECO:0007669"/>
    <property type="project" value="UniProtKB-UniRule"/>
</dbReference>
<dbReference type="GO" id="GO:0008270">
    <property type="term" value="F:zinc ion binding"/>
    <property type="evidence" value="ECO:0007669"/>
    <property type="project" value="UniProtKB-UniRule"/>
</dbReference>
<dbReference type="GO" id="GO:0019877">
    <property type="term" value="P:diaminopimelate biosynthetic process"/>
    <property type="evidence" value="ECO:0007669"/>
    <property type="project" value="UniProtKB-UniRule"/>
</dbReference>
<dbReference type="GO" id="GO:0006526">
    <property type="term" value="P:L-arginine biosynthetic process"/>
    <property type="evidence" value="ECO:0007669"/>
    <property type="project" value="TreeGrafter"/>
</dbReference>
<dbReference type="GO" id="GO:0009089">
    <property type="term" value="P:lysine biosynthetic process via diaminopimelate"/>
    <property type="evidence" value="ECO:0007669"/>
    <property type="project" value="UniProtKB-UniRule"/>
</dbReference>
<dbReference type="CDD" id="cd03891">
    <property type="entry name" value="M20_DapE_proteobac"/>
    <property type="match status" value="1"/>
</dbReference>
<dbReference type="Gene3D" id="3.40.630.10">
    <property type="entry name" value="Zn peptidases"/>
    <property type="match status" value="2"/>
</dbReference>
<dbReference type="HAMAP" id="MF_01690">
    <property type="entry name" value="DapE"/>
    <property type="match status" value="1"/>
</dbReference>
<dbReference type="InterPro" id="IPR036264">
    <property type="entry name" value="Bact_exopeptidase_dim_dom"/>
</dbReference>
<dbReference type="InterPro" id="IPR005941">
    <property type="entry name" value="DapE_proteobac"/>
</dbReference>
<dbReference type="InterPro" id="IPR002933">
    <property type="entry name" value="Peptidase_M20"/>
</dbReference>
<dbReference type="InterPro" id="IPR011650">
    <property type="entry name" value="Peptidase_M20_dimer"/>
</dbReference>
<dbReference type="InterPro" id="IPR050072">
    <property type="entry name" value="Peptidase_M20A"/>
</dbReference>
<dbReference type="NCBIfam" id="TIGR01246">
    <property type="entry name" value="dapE_proteo"/>
    <property type="match status" value="1"/>
</dbReference>
<dbReference type="NCBIfam" id="NF009557">
    <property type="entry name" value="PRK13009.1"/>
    <property type="match status" value="1"/>
</dbReference>
<dbReference type="PANTHER" id="PTHR43808">
    <property type="entry name" value="ACETYLORNITHINE DEACETYLASE"/>
    <property type="match status" value="1"/>
</dbReference>
<dbReference type="PANTHER" id="PTHR43808:SF31">
    <property type="entry name" value="N-ACETYL-L-CITRULLINE DEACETYLASE"/>
    <property type="match status" value="1"/>
</dbReference>
<dbReference type="Pfam" id="PF07687">
    <property type="entry name" value="M20_dimer"/>
    <property type="match status" value="1"/>
</dbReference>
<dbReference type="Pfam" id="PF01546">
    <property type="entry name" value="Peptidase_M20"/>
    <property type="match status" value="1"/>
</dbReference>
<dbReference type="SUPFAM" id="SSF55031">
    <property type="entry name" value="Bacterial exopeptidase dimerisation domain"/>
    <property type="match status" value="1"/>
</dbReference>
<dbReference type="SUPFAM" id="SSF53187">
    <property type="entry name" value="Zn-dependent exopeptidases"/>
    <property type="match status" value="1"/>
</dbReference>
<organism>
    <name type="scientific">Rhodopseudomonas palustris (strain TIE-1)</name>
    <dbReference type="NCBI Taxonomy" id="395960"/>
    <lineage>
        <taxon>Bacteria</taxon>
        <taxon>Pseudomonadati</taxon>
        <taxon>Pseudomonadota</taxon>
        <taxon>Alphaproteobacteria</taxon>
        <taxon>Hyphomicrobiales</taxon>
        <taxon>Nitrobacteraceae</taxon>
        <taxon>Rhodopseudomonas</taxon>
    </lineage>
</organism>
<keyword id="KW-0028">Amino-acid biosynthesis</keyword>
<keyword id="KW-0170">Cobalt</keyword>
<keyword id="KW-0220">Diaminopimelate biosynthesis</keyword>
<keyword id="KW-0378">Hydrolase</keyword>
<keyword id="KW-0457">Lysine biosynthesis</keyword>
<keyword id="KW-0479">Metal-binding</keyword>
<keyword id="KW-0862">Zinc</keyword>
<gene>
    <name evidence="1" type="primary">dapE</name>
    <name type="ordered locus">Rpal_0628</name>
</gene>
<feature type="chain" id="PRO_0000375694" description="Succinyl-diaminopimelate desuccinylase">
    <location>
        <begin position="1"/>
        <end position="387"/>
    </location>
</feature>
<feature type="active site" evidence="1">
    <location>
        <position position="76"/>
    </location>
</feature>
<feature type="active site" description="Proton acceptor" evidence="1">
    <location>
        <position position="142"/>
    </location>
</feature>
<feature type="binding site" evidence="1">
    <location>
        <position position="74"/>
    </location>
    <ligand>
        <name>Zn(2+)</name>
        <dbReference type="ChEBI" id="CHEBI:29105"/>
        <label>1</label>
    </ligand>
</feature>
<feature type="binding site" evidence="1">
    <location>
        <position position="107"/>
    </location>
    <ligand>
        <name>Zn(2+)</name>
        <dbReference type="ChEBI" id="CHEBI:29105"/>
        <label>1</label>
    </ligand>
</feature>
<feature type="binding site" evidence="1">
    <location>
        <position position="107"/>
    </location>
    <ligand>
        <name>Zn(2+)</name>
        <dbReference type="ChEBI" id="CHEBI:29105"/>
        <label>2</label>
    </ligand>
</feature>
<feature type="binding site" evidence="1">
    <location>
        <position position="143"/>
    </location>
    <ligand>
        <name>Zn(2+)</name>
        <dbReference type="ChEBI" id="CHEBI:29105"/>
        <label>2</label>
    </ligand>
</feature>
<feature type="binding site" evidence="1">
    <location>
        <position position="171"/>
    </location>
    <ligand>
        <name>Zn(2+)</name>
        <dbReference type="ChEBI" id="CHEBI:29105"/>
        <label>1</label>
    </ligand>
</feature>
<feature type="binding site" evidence="1">
    <location>
        <position position="360"/>
    </location>
    <ligand>
        <name>Zn(2+)</name>
        <dbReference type="ChEBI" id="CHEBI:29105"/>
        <label>2</label>
    </ligand>
</feature>